<organism>
    <name type="scientific">Rattus norvegicus</name>
    <name type="common">Rat</name>
    <dbReference type="NCBI Taxonomy" id="10116"/>
    <lineage>
        <taxon>Eukaryota</taxon>
        <taxon>Metazoa</taxon>
        <taxon>Chordata</taxon>
        <taxon>Craniata</taxon>
        <taxon>Vertebrata</taxon>
        <taxon>Euteleostomi</taxon>
        <taxon>Mammalia</taxon>
        <taxon>Eutheria</taxon>
        <taxon>Euarchontoglires</taxon>
        <taxon>Glires</taxon>
        <taxon>Rodentia</taxon>
        <taxon>Myomorpha</taxon>
        <taxon>Muroidea</taxon>
        <taxon>Muridae</taxon>
        <taxon>Murinae</taxon>
        <taxon>Rattus</taxon>
    </lineage>
</organism>
<feature type="chain" id="PRO_0000204209" description="Regulator of G-protein signaling 10">
    <location>
        <begin position="1"/>
        <end position="181"/>
    </location>
</feature>
<feature type="domain" description="RGS" evidence="3">
    <location>
        <begin position="41"/>
        <end position="156"/>
    </location>
</feature>
<feature type="region of interest" description="Disordered" evidence="4">
    <location>
        <begin position="1"/>
        <end position="35"/>
    </location>
</feature>
<feature type="region of interest" description="Disordered" evidence="4">
    <location>
        <begin position="157"/>
        <end position="181"/>
    </location>
</feature>
<feature type="modified residue" description="Phosphoserine" evidence="1">
    <location>
        <position position="24"/>
    </location>
</feature>
<feature type="modified residue" description="Phosphoserine" evidence="2">
    <location>
        <position position="41"/>
    </location>
</feature>
<feature type="modified residue" description="Phosphoserine" evidence="1">
    <location>
        <position position="176"/>
    </location>
</feature>
<feature type="lipid moiety-binding region" description="S-palmitoyl cysteine" evidence="1">
    <location>
        <position position="74"/>
    </location>
</feature>
<comment type="function">
    <text evidence="1">Regulates G protein-coupled receptor signaling cascades, including signaling downstream of the muscarinic acetylcholine receptor CHRM2. Inhibits signal transduction by increasing the GTPase activity of G protein alpha subunits, thereby driving them into their inactive GDP-bound form. Modulates the activity of potassium channels that are activated in response to CHRM2 signaling. Activity on GNAZ is inhibited by palmitoylation of the G-protein.</text>
</comment>
<comment type="subunit">
    <text evidence="1">Interacts with GNAZ, GNAI1 and GNAI3. Associates specifically with the activated, GTP-bound forms of GNAZ and GNAI3.</text>
</comment>
<comment type="subcellular location">
    <subcellularLocation>
        <location evidence="1">Cytoplasm</location>
        <location evidence="1">Cytosol</location>
    </subcellularLocation>
    <subcellularLocation>
        <location evidence="1">Nucleus</location>
    </subcellularLocation>
    <text evidence="1">Forskolin treatment promotes phosphorylation and translocation to the nucleus.</text>
</comment>
<accession>P49806</accession>
<accession>G3V8Q0</accession>
<protein>
    <recommendedName>
        <fullName>Regulator of G-protein signaling 10</fullName>
        <shortName>RGS10</shortName>
    </recommendedName>
</protein>
<evidence type="ECO:0000250" key="1">
    <source>
        <dbReference type="UniProtKB" id="O43665"/>
    </source>
</evidence>
<evidence type="ECO:0000250" key="2">
    <source>
        <dbReference type="UniProtKB" id="Q9CQE5"/>
    </source>
</evidence>
<evidence type="ECO:0000255" key="3">
    <source>
        <dbReference type="PROSITE-ProRule" id="PRU00171"/>
    </source>
</evidence>
<evidence type="ECO:0000256" key="4">
    <source>
        <dbReference type="SAM" id="MobiDB-lite"/>
    </source>
</evidence>
<reference key="1">
    <citation type="journal article" date="2004" name="Nature">
        <title>Genome sequence of the Brown Norway rat yields insights into mammalian evolution.</title>
        <authorList>
            <person name="Gibbs R.A."/>
            <person name="Weinstock G.M."/>
            <person name="Metzker M.L."/>
            <person name="Muzny D.M."/>
            <person name="Sodergren E.J."/>
            <person name="Scherer S."/>
            <person name="Scott G."/>
            <person name="Steffen D."/>
            <person name="Worley K.C."/>
            <person name="Burch P.E."/>
            <person name="Okwuonu G."/>
            <person name="Hines S."/>
            <person name="Lewis L."/>
            <person name="Deramo C."/>
            <person name="Delgado O."/>
            <person name="Dugan-Rocha S."/>
            <person name="Miner G."/>
            <person name="Morgan M."/>
            <person name="Hawes A."/>
            <person name="Gill R."/>
            <person name="Holt R.A."/>
            <person name="Adams M.D."/>
            <person name="Amanatides P.G."/>
            <person name="Baden-Tillson H."/>
            <person name="Barnstead M."/>
            <person name="Chin S."/>
            <person name="Evans C.A."/>
            <person name="Ferriera S."/>
            <person name="Fosler C."/>
            <person name="Glodek A."/>
            <person name="Gu Z."/>
            <person name="Jennings D."/>
            <person name="Kraft C.L."/>
            <person name="Nguyen T."/>
            <person name="Pfannkoch C.M."/>
            <person name="Sitter C."/>
            <person name="Sutton G.G."/>
            <person name="Venter J.C."/>
            <person name="Woodage T."/>
            <person name="Smith D."/>
            <person name="Lee H.-M."/>
            <person name="Gustafson E."/>
            <person name="Cahill P."/>
            <person name="Kana A."/>
            <person name="Doucette-Stamm L."/>
            <person name="Weinstock K."/>
            <person name="Fechtel K."/>
            <person name="Weiss R.B."/>
            <person name="Dunn D.M."/>
            <person name="Green E.D."/>
            <person name="Blakesley R.W."/>
            <person name="Bouffard G.G."/>
            <person name="De Jong P.J."/>
            <person name="Osoegawa K."/>
            <person name="Zhu B."/>
            <person name="Marra M."/>
            <person name="Schein J."/>
            <person name="Bosdet I."/>
            <person name="Fjell C."/>
            <person name="Jones S."/>
            <person name="Krzywinski M."/>
            <person name="Mathewson C."/>
            <person name="Siddiqui A."/>
            <person name="Wye N."/>
            <person name="McPherson J."/>
            <person name="Zhao S."/>
            <person name="Fraser C.M."/>
            <person name="Shetty J."/>
            <person name="Shatsman S."/>
            <person name="Geer K."/>
            <person name="Chen Y."/>
            <person name="Abramzon S."/>
            <person name="Nierman W.C."/>
            <person name="Havlak P.H."/>
            <person name="Chen R."/>
            <person name="Durbin K.J."/>
            <person name="Egan A."/>
            <person name="Ren Y."/>
            <person name="Song X.-Z."/>
            <person name="Li B."/>
            <person name="Liu Y."/>
            <person name="Qin X."/>
            <person name="Cawley S."/>
            <person name="Cooney A.J."/>
            <person name="D'Souza L.M."/>
            <person name="Martin K."/>
            <person name="Wu J.Q."/>
            <person name="Gonzalez-Garay M.L."/>
            <person name="Jackson A.R."/>
            <person name="Kalafus K.J."/>
            <person name="McLeod M.P."/>
            <person name="Milosavljevic A."/>
            <person name="Virk D."/>
            <person name="Volkov A."/>
            <person name="Wheeler D.A."/>
            <person name="Zhang Z."/>
            <person name="Bailey J.A."/>
            <person name="Eichler E.E."/>
            <person name="Tuzun E."/>
            <person name="Birney E."/>
            <person name="Mongin E."/>
            <person name="Ureta-Vidal A."/>
            <person name="Woodwark C."/>
            <person name="Zdobnov E."/>
            <person name="Bork P."/>
            <person name="Suyama M."/>
            <person name="Torrents D."/>
            <person name="Alexandersson M."/>
            <person name="Trask B.J."/>
            <person name="Young J.M."/>
            <person name="Huang H."/>
            <person name="Wang H."/>
            <person name="Xing H."/>
            <person name="Daniels S."/>
            <person name="Gietzen D."/>
            <person name="Schmidt J."/>
            <person name="Stevens K."/>
            <person name="Vitt U."/>
            <person name="Wingrove J."/>
            <person name="Camara F."/>
            <person name="Mar Alba M."/>
            <person name="Abril J.F."/>
            <person name="Guigo R."/>
            <person name="Smit A."/>
            <person name="Dubchak I."/>
            <person name="Rubin E.M."/>
            <person name="Couronne O."/>
            <person name="Poliakov A."/>
            <person name="Huebner N."/>
            <person name="Ganten D."/>
            <person name="Goesele C."/>
            <person name="Hummel O."/>
            <person name="Kreitler T."/>
            <person name="Lee Y.-A."/>
            <person name="Monti J."/>
            <person name="Schulz H."/>
            <person name="Zimdahl H."/>
            <person name="Himmelbauer H."/>
            <person name="Lehrach H."/>
            <person name="Jacob H.J."/>
            <person name="Bromberg S."/>
            <person name="Gullings-Handley J."/>
            <person name="Jensen-Seaman M.I."/>
            <person name="Kwitek A.E."/>
            <person name="Lazar J."/>
            <person name="Pasko D."/>
            <person name="Tonellato P.J."/>
            <person name="Twigger S."/>
            <person name="Ponting C.P."/>
            <person name="Duarte J.M."/>
            <person name="Rice S."/>
            <person name="Goodstadt L."/>
            <person name="Beatson S.A."/>
            <person name="Emes R.D."/>
            <person name="Winter E.E."/>
            <person name="Webber C."/>
            <person name="Brandt P."/>
            <person name="Nyakatura G."/>
            <person name="Adetobi M."/>
            <person name="Chiaromonte F."/>
            <person name="Elnitski L."/>
            <person name="Eswara P."/>
            <person name="Hardison R.C."/>
            <person name="Hou M."/>
            <person name="Kolbe D."/>
            <person name="Makova K."/>
            <person name="Miller W."/>
            <person name="Nekrutenko A."/>
            <person name="Riemer C."/>
            <person name="Schwartz S."/>
            <person name="Taylor J."/>
            <person name="Yang S."/>
            <person name="Zhang Y."/>
            <person name="Lindpaintner K."/>
            <person name="Andrews T.D."/>
            <person name="Caccamo M."/>
            <person name="Clamp M."/>
            <person name="Clarke L."/>
            <person name="Curwen V."/>
            <person name="Durbin R.M."/>
            <person name="Eyras E."/>
            <person name="Searle S.M."/>
            <person name="Cooper G.M."/>
            <person name="Batzoglou S."/>
            <person name="Brudno M."/>
            <person name="Sidow A."/>
            <person name="Stone E.A."/>
            <person name="Payseur B.A."/>
            <person name="Bourque G."/>
            <person name="Lopez-Otin C."/>
            <person name="Puente X.S."/>
            <person name="Chakrabarti K."/>
            <person name="Chatterji S."/>
            <person name="Dewey C."/>
            <person name="Pachter L."/>
            <person name="Bray N."/>
            <person name="Yap V.B."/>
            <person name="Caspi A."/>
            <person name="Tesler G."/>
            <person name="Pevzner P.A."/>
            <person name="Haussler D."/>
            <person name="Roskin K.M."/>
            <person name="Baertsch R."/>
            <person name="Clawson H."/>
            <person name="Furey T.S."/>
            <person name="Hinrichs A.S."/>
            <person name="Karolchik D."/>
            <person name="Kent W.J."/>
            <person name="Rosenbloom K.R."/>
            <person name="Trumbower H."/>
            <person name="Weirauch M."/>
            <person name="Cooper D.N."/>
            <person name="Stenson P.D."/>
            <person name="Ma B."/>
            <person name="Brent M."/>
            <person name="Arumugam M."/>
            <person name="Shteynberg D."/>
            <person name="Copley R.R."/>
            <person name="Taylor M.S."/>
            <person name="Riethman H."/>
            <person name="Mudunuri U."/>
            <person name="Peterson J."/>
            <person name="Guyer M."/>
            <person name="Felsenfeld A."/>
            <person name="Old S."/>
            <person name="Mockrin S."/>
            <person name="Collins F.S."/>
        </authorList>
    </citation>
    <scope>NUCLEOTIDE SEQUENCE [LARGE SCALE GENOMIC DNA]</scope>
    <source>
        <strain>Brown Norway</strain>
    </source>
</reference>
<reference key="2">
    <citation type="submission" date="2005-09" db="EMBL/GenBank/DDBJ databases">
        <authorList>
            <person name="Mural R.J."/>
            <person name="Adams M.D."/>
            <person name="Myers E.W."/>
            <person name="Smith H.O."/>
            <person name="Venter J.C."/>
        </authorList>
    </citation>
    <scope>NUCLEOTIDE SEQUENCE [LARGE SCALE GENOMIC DNA]</scope>
    <source>
        <strain>Brown Norway</strain>
    </source>
</reference>
<reference key="3">
    <citation type="journal article" date="1996" name="Cell">
        <title>EGL-10 regulates G protein signaling in the C. elegans nervous system and shares a conserved domain with many mammalian proteins.</title>
        <authorList>
            <person name="Koelle M.R."/>
            <person name="Horvitz H.R."/>
        </authorList>
    </citation>
    <scope>NUCLEOTIDE SEQUENCE [MRNA] OF 72-137</scope>
    <source>
        <tissue>Brain</tissue>
    </source>
</reference>
<reference key="4">
    <citation type="journal article" date="2012" name="Nat. Commun.">
        <title>Quantitative maps of protein phosphorylation sites across 14 different rat organs and tissues.</title>
        <authorList>
            <person name="Lundby A."/>
            <person name="Secher A."/>
            <person name="Lage K."/>
            <person name="Nordsborg N.B."/>
            <person name="Dmytriyev A."/>
            <person name="Lundby C."/>
            <person name="Olsen J.V."/>
        </authorList>
    </citation>
    <scope>IDENTIFICATION BY MASS SPECTROMETRY [LARGE SCALE ANALYSIS]</scope>
</reference>
<name>RGS10_RAT</name>
<gene>
    <name type="primary">Rgs10</name>
</gene>
<proteinExistence type="evidence at protein level"/>
<dbReference type="EMBL" id="AABR07005782">
    <property type="status" value="NOT_ANNOTATED_CDS"/>
    <property type="molecule type" value="Genomic_DNA"/>
</dbReference>
<dbReference type="EMBL" id="AABR07005783">
    <property type="status" value="NOT_ANNOTATED_CDS"/>
    <property type="molecule type" value="Genomic_DNA"/>
</dbReference>
<dbReference type="EMBL" id="AABR07071989">
    <property type="status" value="NOT_ANNOTATED_CDS"/>
    <property type="molecule type" value="Genomic_DNA"/>
</dbReference>
<dbReference type="EMBL" id="CH473956">
    <property type="protein sequence ID" value="EDM17179.1"/>
    <property type="molecule type" value="Genomic_DNA"/>
</dbReference>
<dbReference type="EMBL" id="U32437">
    <property type="protein sequence ID" value="AAC52374.1"/>
    <property type="molecule type" value="mRNA"/>
</dbReference>
<dbReference type="SMR" id="P49806"/>
<dbReference type="FunCoup" id="P49806">
    <property type="interactions" value="177"/>
</dbReference>
<dbReference type="STRING" id="10116.ENSRNOP00000027375"/>
<dbReference type="PhosphoSitePlus" id="P49806"/>
<dbReference type="PaxDb" id="10116-ENSRNOP00000027375"/>
<dbReference type="Ensembl" id="ENSRNOT00000027375.6">
    <property type="protein sequence ID" value="ENSRNOP00000027375.4"/>
    <property type="gene ID" value="ENSRNOG00000042592.3"/>
</dbReference>
<dbReference type="UCSC" id="RGD:3562">
    <property type="organism name" value="rat"/>
</dbReference>
<dbReference type="AGR" id="RGD:3562"/>
<dbReference type="RGD" id="3562">
    <property type="gene designation" value="Rgs10"/>
</dbReference>
<dbReference type="eggNOG" id="KOG3589">
    <property type="taxonomic scope" value="Eukaryota"/>
</dbReference>
<dbReference type="GeneTree" id="ENSGT00940000161426"/>
<dbReference type="InParanoid" id="P49806"/>
<dbReference type="OMA" id="SNKASYQ"/>
<dbReference type="TreeFam" id="TF315837"/>
<dbReference type="PRO" id="PR:P49806"/>
<dbReference type="Proteomes" id="UP000002494">
    <property type="component" value="Chromosome 1"/>
</dbReference>
<dbReference type="Proteomes" id="UP000234681">
    <property type="component" value="Chromosome 1"/>
</dbReference>
<dbReference type="Bgee" id="ENSRNOG00000042592">
    <property type="expression patterns" value="Expressed in thymus and 20 other cell types or tissues"/>
</dbReference>
<dbReference type="GO" id="GO:0043679">
    <property type="term" value="C:axon terminus"/>
    <property type="evidence" value="ECO:0000314"/>
    <property type="project" value="RGD"/>
</dbReference>
<dbReference type="GO" id="GO:0005829">
    <property type="term" value="C:cytosol"/>
    <property type="evidence" value="ECO:0000250"/>
    <property type="project" value="UniProtKB"/>
</dbReference>
<dbReference type="GO" id="GO:0043197">
    <property type="term" value="C:dendritic spine"/>
    <property type="evidence" value="ECO:0000314"/>
    <property type="project" value="RGD"/>
</dbReference>
<dbReference type="GO" id="GO:0043025">
    <property type="term" value="C:neuronal cell body"/>
    <property type="evidence" value="ECO:0000314"/>
    <property type="project" value="RGD"/>
</dbReference>
<dbReference type="GO" id="GO:0005634">
    <property type="term" value="C:nucleus"/>
    <property type="evidence" value="ECO:0000266"/>
    <property type="project" value="RGD"/>
</dbReference>
<dbReference type="GO" id="GO:0001965">
    <property type="term" value="F:G-protein alpha-subunit binding"/>
    <property type="evidence" value="ECO:0000266"/>
    <property type="project" value="RGD"/>
</dbReference>
<dbReference type="GO" id="GO:0005096">
    <property type="term" value="F:GTPase activator activity"/>
    <property type="evidence" value="ECO:0000250"/>
    <property type="project" value="UniProtKB"/>
</dbReference>
<dbReference type="GO" id="GO:0007213">
    <property type="term" value="P:G protein-coupled acetylcholine receptor signaling pathway"/>
    <property type="evidence" value="ECO:0000250"/>
    <property type="project" value="UniProtKB"/>
</dbReference>
<dbReference type="GO" id="GO:0009968">
    <property type="term" value="P:negative regulation of signal transduction"/>
    <property type="evidence" value="ECO:0007669"/>
    <property type="project" value="UniProtKB-KW"/>
</dbReference>
<dbReference type="GO" id="GO:0043547">
    <property type="term" value="P:positive regulation of GTPase activity"/>
    <property type="evidence" value="ECO:0000250"/>
    <property type="project" value="UniProtKB"/>
</dbReference>
<dbReference type="GO" id="GO:0008277">
    <property type="term" value="P:regulation of G protein-coupled receptor signaling pathway"/>
    <property type="evidence" value="ECO:0000304"/>
    <property type="project" value="RGD"/>
</dbReference>
<dbReference type="GO" id="GO:0001975">
    <property type="term" value="P:response to amphetamine"/>
    <property type="evidence" value="ECO:0000270"/>
    <property type="project" value="RGD"/>
</dbReference>
<dbReference type="CDD" id="cd08741">
    <property type="entry name" value="RGS_RGS10"/>
    <property type="match status" value="1"/>
</dbReference>
<dbReference type="FunFam" id="1.10.167.10:FF:000001">
    <property type="entry name" value="Putative regulator of g-protein signaling 12"/>
    <property type="match status" value="1"/>
</dbReference>
<dbReference type="Gene3D" id="1.10.196.10">
    <property type="match status" value="1"/>
</dbReference>
<dbReference type="Gene3D" id="1.10.167.10">
    <property type="entry name" value="Regulator of G-protein Signalling 4, domain 2"/>
    <property type="match status" value="1"/>
</dbReference>
<dbReference type="InterPro" id="IPR016137">
    <property type="entry name" value="RGS"/>
</dbReference>
<dbReference type="InterPro" id="IPR046995">
    <property type="entry name" value="RGS10/12/14-like"/>
</dbReference>
<dbReference type="InterPro" id="IPR037879">
    <property type="entry name" value="RGS10_RGS"/>
</dbReference>
<dbReference type="InterPro" id="IPR036305">
    <property type="entry name" value="RGS_sf"/>
</dbReference>
<dbReference type="InterPro" id="IPR024066">
    <property type="entry name" value="RGS_subdom1/3"/>
</dbReference>
<dbReference type="InterPro" id="IPR044926">
    <property type="entry name" value="RGS_subdomain_2"/>
</dbReference>
<dbReference type="PANTHER" id="PTHR45945">
    <property type="entry name" value="REGULATOR OF G-PROTEIN SIGNALING LOCO"/>
    <property type="match status" value="1"/>
</dbReference>
<dbReference type="PANTHER" id="PTHR45945:SF3">
    <property type="entry name" value="REGULATOR OF G-PROTEIN SIGNALING LOCO"/>
    <property type="match status" value="1"/>
</dbReference>
<dbReference type="Pfam" id="PF00615">
    <property type="entry name" value="RGS"/>
    <property type="match status" value="1"/>
</dbReference>
<dbReference type="PRINTS" id="PR01301">
    <property type="entry name" value="RGSPROTEIN"/>
</dbReference>
<dbReference type="SMART" id="SM00315">
    <property type="entry name" value="RGS"/>
    <property type="match status" value="1"/>
</dbReference>
<dbReference type="SUPFAM" id="SSF48097">
    <property type="entry name" value="Regulator of G-protein signaling, RGS"/>
    <property type="match status" value="1"/>
</dbReference>
<dbReference type="PROSITE" id="PS50132">
    <property type="entry name" value="RGS"/>
    <property type="match status" value="1"/>
</dbReference>
<sequence>MFTRAVSRLSRKRPPSDIHDGDGSSSSGHQSLKSTAKWASSLENLLEDPEGVKRFREFLKKEFSEENVLFWLACEDFKKTEDKKQMQEKAKKIYMTFLSNKASSQVNVEGQSRLTEKILEEPHPLMFQKLQDQIFNLMKYDSYSRFLKSDLFLKHRRTEEEEEDPPDAQTAAKRASRIYNT</sequence>
<keyword id="KW-0963">Cytoplasm</keyword>
<keyword id="KW-0343">GTPase activation</keyword>
<keyword id="KW-0449">Lipoprotein</keyword>
<keyword id="KW-0539">Nucleus</keyword>
<keyword id="KW-0564">Palmitate</keyword>
<keyword id="KW-0597">Phosphoprotein</keyword>
<keyword id="KW-1185">Reference proteome</keyword>
<keyword id="KW-0734">Signal transduction inhibitor</keyword>